<protein>
    <recommendedName>
        <fullName>Acylamino-acid-releasing enzyme</fullName>
        <shortName>AARE</shortName>
        <ecNumber evidence="5">3.4.19.1</ecNumber>
    </recommendedName>
    <alternativeName>
        <fullName>Acyl-peptide hydrolase</fullName>
        <shortName>APH</shortName>
    </alternativeName>
    <alternativeName>
        <fullName>Acylaminoacyl-peptidase</fullName>
    </alternativeName>
</protein>
<keyword id="KW-0007">Acetylation</keyword>
<keyword id="KW-0963">Cytoplasm</keyword>
<keyword id="KW-0903">Direct protein sequencing</keyword>
<keyword id="KW-0378">Hydrolase</keyword>
<keyword id="KW-0597">Phosphoprotein</keyword>
<keyword id="KW-1185">Reference proteome</keyword>
<comment type="function">
    <text evidence="1 2 5">This enzyme catalyzes the hydrolysis of the N-terminal peptide bond of an N-acetylated peptide to generate an N-acetylated amino acid and a peptide with a free N-terminus (PubMed:8375399). It preferentially cleaves off Ac-Ala, Ac-Met and Ac-Ser (By similarity). Also, involved in the degradation of oxidized and glycated proteins (By similarity).</text>
</comment>
<comment type="catalytic activity">
    <reaction evidence="5">
        <text>Cleavage of an N-acetyl or N-formyl amino acid from the N-terminus of a polypeptide.</text>
        <dbReference type="EC" id="3.4.19.1"/>
    </reaction>
</comment>
<comment type="activity regulation">
    <text evidence="3">Homotetramerization is required for activity. Tetramerization results in the formation of a gated channel which is involved in substrate selection and substrate access to the catalytic sites.</text>
</comment>
<comment type="subunit">
    <text evidence="5">Homotetramer.</text>
</comment>
<comment type="subcellular location">
    <subcellularLocation>
        <location evidence="2">Cytoplasm</location>
    </subcellularLocation>
</comment>
<comment type="tissue specificity">
    <text evidence="5">Expressed in lens (at protein level).</text>
</comment>
<comment type="similarity">
    <text evidence="6">Belongs to the peptidase S9C family.</text>
</comment>
<dbReference type="EC" id="3.4.19.1" evidence="5"/>
<dbReference type="EMBL" id="BC123400">
    <property type="protein sequence ID" value="AAI23401.1"/>
    <property type="molecule type" value="mRNA"/>
</dbReference>
<dbReference type="PIR" id="S36842">
    <property type="entry name" value="S36842"/>
</dbReference>
<dbReference type="RefSeq" id="NP_001076900.1">
    <property type="nucleotide sequence ID" value="NM_001083431.1"/>
</dbReference>
<dbReference type="SMR" id="P80227"/>
<dbReference type="FunCoup" id="P80227">
    <property type="interactions" value="2356"/>
</dbReference>
<dbReference type="STRING" id="9913.ENSBTAP00000015388"/>
<dbReference type="ESTHER" id="bovin-acph">
    <property type="family name" value="ACPH_Peptidase_S9"/>
</dbReference>
<dbReference type="MEROPS" id="S09.004"/>
<dbReference type="PaxDb" id="9913-ENSBTAP00000015388"/>
<dbReference type="GeneID" id="514666"/>
<dbReference type="KEGG" id="bta:514666"/>
<dbReference type="CTD" id="327"/>
<dbReference type="VEuPathDB" id="HostDB:ENSBTAG00000011583"/>
<dbReference type="eggNOG" id="KOG2100">
    <property type="taxonomic scope" value="Eukaryota"/>
</dbReference>
<dbReference type="HOGENOM" id="CLU_014230_1_1_1"/>
<dbReference type="InParanoid" id="P80227"/>
<dbReference type="OMA" id="QEIATPF"/>
<dbReference type="OrthoDB" id="416344at2759"/>
<dbReference type="TreeFam" id="TF312937"/>
<dbReference type="Reactome" id="R-BTA-6798695">
    <property type="pathway name" value="Neutrophil degranulation"/>
</dbReference>
<dbReference type="Reactome" id="R-BTA-72764">
    <property type="pathway name" value="Eukaryotic Translation Termination"/>
</dbReference>
<dbReference type="Proteomes" id="UP000009136">
    <property type="component" value="Chromosome 22"/>
</dbReference>
<dbReference type="Bgee" id="ENSBTAG00000011583">
    <property type="expression patterns" value="Expressed in digestive system secreted substance and 107 other cell types or tissues"/>
</dbReference>
<dbReference type="GO" id="GO:0005737">
    <property type="term" value="C:cytoplasm"/>
    <property type="evidence" value="ECO:0007669"/>
    <property type="project" value="UniProtKB-SubCell"/>
</dbReference>
<dbReference type="GO" id="GO:0008242">
    <property type="term" value="F:omega peptidase activity"/>
    <property type="evidence" value="ECO:0007669"/>
    <property type="project" value="UniProtKB-EC"/>
</dbReference>
<dbReference type="GO" id="GO:0004252">
    <property type="term" value="F:serine-type endopeptidase activity"/>
    <property type="evidence" value="ECO:0000318"/>
    <property type="project" value="GO_Central"/>
</dbReference>
<dbReference type="GO" id="GO:0006508">
    <property type="term" value="P:proteolysis"/>
    <property type="evidence" value="ECO:0007669"/>
    <property type="project" value="InterPro"/>
</dbReference>
<dbReference type="FunFam" id="2.120.10.30:FF:000047">
    <property type="entry name" value="Acylamino-acid-releasing enzyme"/>
    <property type="match status" value="1"/>
</dbReference>
<dbReference type="FunFam" id="3.40.50.1820:FF:000043">
    <property type="entry name" value="acylamino-acid-releasing enzyme"/>
    <property type="match status" value="1"/>
</dbReference>
<dbReference type="Gene3D" id="3.40.50.1820">
    <property type="entry name" value="alpha/beta hydrolase"/>
    <property type="match status" value="1"/>
</dbReference>
<dbReference type="Gene3D" id="2.120.10.30">
    <property type="entry name" value="TolB, C-terminal domain"/>
    <property type="match status" value="1"/>
</dbReference>
<dbReference type="InterPro" id="IPR011042">
    <property type="entry name" value="6-blade_b-propeller_TolB-like"/>
</dbReference>
<dbReference type="InterPro" id="IPR045550">
    <property type="entry name" value="AARE_N"/>
</dbReference>
<dbReference type="InterPro" id="IPR029058">
    <property type="entry name" value="AB_hydrolase_fold"/>
</dbReference>
<dbReference type="InterPro" id="IPR002471">
    <property type="entry name" value="Pept_S9_AS"/>
</dbReference>
<dbReference type="InterPro" id="IPR001375">
    <property type="entry name" value="Peptidase_S9_cat"/>
</dbReference>
<dbReference type="PANTHER" id="PTHR42776:SF4">
    <property type="entry name" value="ACYLAMINO-ACID-RELEASING ENZYME"/>
    <property type="match status" value="1"/>
</dbReference>
<dbReference type="PANTHER" id="PTHR42776">
    <property type="entry name" value="SERINE PEPTIDASE S9 FAMILY MEMBER"/>
    <property type="match status" value="1"/>
</dbReference>
<dbReference type="Pfam" id="PF19283">
    <property type="entry name" value="APEH_N"/>
    <property type="match status" value="1"/>
</dbReference>
<dbReference type="Pfam" id="PF00326">
    <property type="entry name" value="Peptidase_S9"/>
    <property type="match status" value="1"/>
</dbReference>
<dbReference type="SUPFAM" id="SSF53474">
    <property type="entry name" value="alpha/beta-Hydrolases"/>
    <property type="match status" value="1"/>
</dbReference>
<dbReference type="SUPFAM" id="SSF50993">
    <property type="entry name" value="Peptidase/esterase 'gauge' domain"/>
    <property type="match status" value="1"/>
</dbReference>
<dbReference type="PROSITE" id="PS00708">
    <property type="entry name" value="PRO_ENDOPEP_SER"/>
    <property type="match status" value="1"/>
</dbReference>
<gene>
    <name type="primary">APEH</name>
</gene>
<sequence length="730" mass="81093">MERQVLLSEPEEAAALYRGLSRQPALSAACLGPEVTTQYGGRYRTVHTEWTQRDLERMENIRFCRQYLVFHDGDSVVFAGPAGNSVETRGELLSRESPSGTMKAVLRKAGSTGEEKQFLEVWEKNRKLKSFNLSALEKHGPVYEDDCFGCLSWSHSETHLLYVAEKKRPKAESFFQTKALDISGSDDEMARPKKPDQAIKGDQFLFYEDWGENMVSKGSPVLCVLDIESGNISVLEGVPESVSPGQAFWAPGDTGVVFAGWWHEPFRLGIRFCTNRRSALYYVDLTGGNCELLSDDSLAVTSPRLSPDQCRIVYLQFPSLVPHQQCGQLCLYDWYTRVTVVVVDVVPRQLGENFSGIYCSLLPLGCWSADSQRVVFDTAQRSRQDLFAVDTQMGTVTPLTAGGSGGSWKLLTIDRDLMVAQFSTPNLPPCLKVGFLPPAGMEQEVVWVSLEEAEPIPDISWSIRVLQPPPEQEHAQYVGLDFEAILIQPSNPPDKTQVPMVVMPHGGPHSSFVTSWMLLPAMLCKMGFAALLVNYRGSTGFGQDSILSLPGNVGSQDVKDVQFAVEQVLQEEHFDAGRVALLGGSHGGFLSCHLIGQYPETYGACVVRNPVINIASMMGSTDIPDWCVVEAGYLYSSDCLPDPNVWSEMLNKSPIKYTPQVKTPVLLMLGQEDRRVPFKQGMEYYRALKARNVPVRLLLYPKSTHSLSEVEVESDSFMNAVIWMCTHLGH</sequence>
<proteinExistence type="evidence at protein level"/>
<accession>P80227</accession>
<accession>A4FUX4</accession>
<evidence type="ECO:0000250" key="1">
    <source>
        <dbReference type="UniProtKB" id="P13676"/>
    </source>
</evidence>
<evidence type="ECO:0000250" key="2">
    <source>
        <dbReference type="UniProtKB" id="P13798"/>
    </source>
</evidence>
<evidence type="ECO:0000250" key="3">
    <source>
        <dbReference type="UniProtKB" id="P19205"/>
    </source>
</evidence>
<evidence type="ECO:0000255" key="4">
    <source>
        <dbReference type="PROSITE-ProRule" id="PRU10084"/>
    </source>
</evidence>
<evidence type="ECO:0000269" key="5">
    <source>
    </source>
</evidence>
<evidence type="ECO:0000305" key="6"/>
<feature type="chain" id="PRO_0000122429" description="Acylamino-acid-releasing enzyme">
    <location>
        <begin position="1"/>
        <end position="730"/>
    </location>
</feature>
<feature type="active site" description="Charge relay system" evidence="4">
    <location>
        <position position="585"/>
    </location>
</feature>
<feature type="active site" description="Charge relay system" evidence="4">
    <location>
        <position position="673"/>
    </location>
</feature>
<feature type="active site" description="Charge relay system" evidence="4">
    <location>
        <position position="705"/>
    </location>
</feature>
<feature type="modified residue" description="N-acetylmethionine" evidence="2">
    <location>
        <position position="1"/>
    </location>
</feature>
<feature type="modified residue" description="Phosphoserine" evidence="2">
    <location>
        <position position="183"/>
    </location>
</feature>
<feature type="modified residue" description="Phosphoserine" evidence="2">
    <location>
        <position position="185"/>
    </location>
</feature>
<reference key="1">
    <citation type="submission" date="2006-09" db="EMBL/GenBank/DDBJ databases">
        <authorList>
            <consortium name="NIH - Mammalian Gene Collection (MGC) project"/>
        </authorList>
    </citation>
    <scope>NUCLEOTIDE SEQUENCE [LARGE SCALE MRNA]</scope>
    <source>
        <strain>Hereford</strain>
        <tissue>Thalamus</tissue>
    </source>
</reference>
<reference key="2">
    <citation type="journal article" date="1993" name="Eur. J. Biochem.">
        <title>Bovine lens acylpeptide hydrolase. Purification and characterization of a tetrameric enzyme resistant to urea denaturation and proteolytic inactivation.</title>
        <authorList>
            <person name="Sharma K.K."/>
            <person name="Ortwerth B.J."/>
        </authorList>
    </citation>
    <scope>PROTEIN SEQUENCE OF 194-213</scope>
    <scope>FUNCTION</scope>
    <scope>CATALYTIC ACTIVITY</scope>
    <scope>SUBUNIT</scope>
    <scope>TISSUE SPECIFICITY</scope>
    <source>
        <tissue>Lens</tissue>
    </source>
</reference>
<name>ACPH_BOVIN</name>
<organism>
    <name type="scientific">Bos taurus</name>
    <name type="common">Bovine</name>
    <dbReference type="NCBI Taxonomy" id="9913"/>
    <lineage>
        <taxon>Eukaryota</taxon>
        <taxon>Metazoa</taxon>
        <taxon>Chordata</taxon>
        <taxon>Craniata</taxon>
        <taxon>Vertebrata</taxon>
        <taxon>Euteleostomi</taxon>
        <taxon>Mammalia</taxon>
        <taxon>Eutheria</taxon>
        <taxon>Laurasiatheria</taxon>
        <taxon>Artiodactyla</taxon>
        <taxon>Ruminantia</taxon>
        <taxon>Pecora</taxon>
        <taxon>Bovidae</taxon>
        <taxon>Bovinae</taxon>
        <taxon>Bos</taxon>
    </lineage>
</organism>